<protein>
    <recommendedName>
        <fullName>Beta-3 adrenergic receptor</fullName>
    </recommendedName>
    <alternativeName>
        <fullName>Beta-3 adrenoreceptor</fullName>
        <shortName>Beta-3 adrenoceptor</shortName>
    </alternativeName>
</protein>
<name>ADRB3_PIG</name>
<sequence>MAPWPQGNSSLPPRPDVSTLAPNNANTSGLPGVPWAVALAGALLAPAVLATVGGNLLVIVAIARTPRLQTMTNVFVTSLATADLVVGLLVVPPGTTLALTGHWPLGATCCELWTSVDVLCVTASIETLCALAVDRYLAVTNPLRYGALVTKRRARAAVVLVWVVSAAVSFAPIMSKWWRVGADAEAQRCHSNPSCCTFASNMPYALLSSSVSFYLPLLVMLFVYARVFVVATSQLRLLRWELSRFPPEESPPAPSRSQSPAPGRPWPSPAGVPSHGRRPARLLPLREHRALCTLGLIMGTFTLCWLPFFVVNVVRALGGPSLVPVPAFLALNWLGYANSAFNPLIYCHSPDFRSAFRRLLCRCGPEEHLAAASPPRAPSGAPETLTHPAESRQSPPLNEASWGLFRP</sequence>
<keyword id="KW-1003">Cell membrane</keyword>
<keyword id="KW-1015">Disulfide bond</keyword>
<keyword id="KW-0297">G-protein coupled receptor</keyword>
<keyword id="KW-0325">Glycoprotein</keyword>
<keyword id="KW-0449">Lipoprotein</keyword>
<keyword id="KW-0472">Membrane</keyword>
<keyword id="KW-0564">Palmitate</keyword>
<keyword id="KW-0675">Receptor</keyword>
<keyword id="KW-1185">Reference proteome</keyword>
<keyword id="KW-0807">Transducer</keyword>
<keyword id="KW-0812">Transmembrane</keyword>
<keyword id="KW-1133">Transmembrane helix</keyword>
<evidence type="ECO:0000250" key="1"/>
<evidence type="ECO:0000250" key="2">
    <source>
        <dbReference type="UniProtKB" id="P13945"/>
    </source>
</evidence>
<evidence type="ECO:0000255" key="3"/>
<evidence type="ECO:0000255" key="4">
    <source>
        <dbReference type="PROSITE-ProRule" id="PRU00521"/>
    </source>
</evidence>
<evidence type="ECO:0000256" key="5">
    <source>
        <dbReference type="SAM" id="MobiDB-lite"/>
    </source>
</evidence>
<evidence type="ECO:0000269" key="6">
    <source>
    </source>
</evidence>
<evidence type="ECO:0000305" key="7"/>
<comment type="function">
    <text>Beta-adrenergic receptors mediate the catecholamine-induced activation of adenylate cyclase through the action of G proteins. Beta-3 is involved in the regulation of lipolysis and thermogenesis.</text>
</comment>
<comment type="subunit">
    <text evidence="2">Interacts with ARRDC3.</text>
</comment>
<comment type="subcellular location">
    <subcellularLocation>
        <location>Cell membrane</location>
        <topology>Multi-pass membrane protein</topology>
    </subcellularLocation>
</comment>
<comment type="tissue specificity">
    <text evidence="6">White and brown adipose tissues.</text>
</comment>
<comment type="similarity">
    <text evidence="4">Belongs to the G-protein coupled receptor 1 family. Adrenergic receptor subfamily. ADRB3 sub-subfamily.</text>
</comment>
<dbReference type="EMBL" id="AF274007">
    <property type="protein sequence ID" value="AAF82301.1"/>
    <property type="molecule type" value="Genomic_DNA"/>
</dbReference>
<dbReference type="EMBL" id="U55858">
    <property type="protein sequence ID" value="AAB07688.1"/>
    <property type="molecule type" value="mRNA"/>
</dbReference>
<dbReference type="SMR" id="Q95252"/>
<dbReference type="FunCoup" id="Q95252">
    <property type="interactions" value="48"/>
</dbReference>
<dbReference type="STRING" id="9823.ENSSSCP00000016767"/>
<dbReference type="GlyCosmos" id="Q95252">
    <property type="glycosylation" value="2 sites, No reported glycans"/>
</dbReference>
<dbReference type="GlyGen" id="Q95252">
    <property type="glycosylation" value="2 sites"/>
</dbReference>
<dbReference type="PaxDb" id="9823-ENSSSCP00000016767"/>
<dbReference type="Ensembl" id="ENSSSCT00025038960.1">
    <property type="protein sequence ID" value="ENSSSCP00025016482.1"/>
    <property type="gene ID" value="ENSSSCG00025028700.1"/>
</dbReference>
<dbReference type="Ensembl" id="ENSSSCT00055012382.1">
    <property type="protein sequence ID" value="ENSSSCP00055009757.1"/>
    <property type="gene ID" value="ENSSSCG00055006394.1"/>
</dbReference>
<dbReference type="Ensembl" id="ENSSSCT00065040660.1">
    <property type="protein sequence ID" value="ENSSSCP00065017201.1"/>
    <property type="gene ID" value="ENSSSCG00065030134.1"/>
</dbReference>
<dbReference type="Ensembl" id="ENSSSCT00070054010.1">
    <property type="protein sequence ID" value="ENSSSCP00070045782.1"/>
    <property type="gene ID" value="ENSSSCG00070026931.1"/>
</dbReference>
<dbReference type="Ensembl" id="ENSSSCT00105032671">
    <property type="protein sequence ID" value="ENSSSCP00105022900"/>
    <property type="gene ID" value="ENSSSCG00105016970"/>
</dbReference>
<dbReference type="Ensembl" id="ENSSSCT00110000167">
    <property type="protein sequence ID" value="ENSSSCP00110000138"/>
    <property type="gene ID" value="ENSSSCG00110000111"/>
</dbReference>
<dbReference type="Ensembl" id="ENSSSCT00115001089">
    <property type="protein sequence ID" value="ENSSSCP00115001019"/>
    <property type="gene ID" value="ENSSSCG00115000668"/>
</dbReference>
<dbReference type="Ensembl" id="ENSSSCT00130055683">
    <property type="protein sequence ID" value="ENSSSCP00130039952"/>
    <property type="gene ID" value="ENSSSCG00130028496"/>
</dbReference>
<dbReference type="eggNOG" id="KOG3656">
    <property type="taxonomic scope" value="Eukaryota"/>
</dbReference>
<dbReference type="HOGENOM" id="CLU_009579_11_0_1"/>
<dbReference type="InParanoid" id="Q95252"/>
<dbReference type="TreeFam" id="TF316350"/>
<dbReference type="Reactome" id="R-SSC-390696">
    <property type="pathway name" value="Adrenoceptors"/>
</dbReference>
<dbReference type="Reactome" id="R-SSC-418555">
    <property type="pathway name" value="G alpha (s) signalling events"/>
</dbReference>
<dbReference type="Proteomes" id="UP000008227">
    <property type="component" value="Unplaced"/>
</dbReference>
<dbReference type="Proteomes" id="UP000314985">
    <property type="component" value="Chromosome 15"/>
</dbReference>
<dbReference type="Proteomes" id="UP000694570">
    <property type="component" value="Unplaced"/>
</dbReference>
<dbReference type="Proteomes" id="UP000694571">
    <property type="component" value="Unplaced"/>
</dbReference>
<dbReference type="Proteomes" id="UP000694720">
    <property type="component" value="Unplaced"/>
</dbReference>
<dbReference type="Proteomes" id="UP000694722">
    <property type="component" value="Unplaced"/>
</dbReference>
<dbReference type="Proteomes" id="UP000694723">
    <property type="component" value="Unplaced"/>
</dbReference>
<dbReference type="Proteomes" id="UP000694724">
    <property type="component" value="Unplaced"/>
</dbReference>
<dbReference type="Proteomes" id="UP000694725">
    <property type="component" value="Unplaced"/>
</dbReference>
<dbReference type="Proteomes" id="UP000694726">
    <property type="component" value="Unplaced"/>
</dbReference>
<dbReference type="Proteomes" id="UP000694727">
    <property type="component" value="Unplaced"/>
</dbReference>
<dbReference type="Proteomes" id="UP000694728">
    <property type="component" value="Unplaced"/>
</dbReference>
<dbReference type="GO" id="GO:0005886">
    <property type="term" value="C:plasma membrane"/>
    <property type="evidence" value="ECO:0000318"/>
    <property type="project" value="GO_Central"/>
</dbReference>
<dbReference type="GO" id="GO:0043235">
    <property type="term" value="C:receptor complex"/>
    <property type="evidence" value="ECO:0000250"/>
    <property type="project" value="HGNC-UCL"/>
</dbReference>
<dbReference type="GO" id="GO:0004939">
    <property type="term" value="F:beta-adrenergic receptor activity"/>
    <property type="evidence" value="ECO:0000250"/>
    <property type="project" value="HGNC-UCL"/>
</dbReference>
<dbReference type="GO" id="GO:0015052">
    <property type="term" value="F:beta3-adrenergic receptor activity"/>
    <property type="evidence" value="ECO:0000250"/>
    <property type="project" value="HGNC-UCL"/>
</dbReference>
<dbReference type="GO" id="GO:0051379">
    <property type="term" value="F:epinephrine binding"/>
    <property type="evidence" value="ECO:0000318"/>
    <property type="project" value="GO_Central"/>
</dbReference>
<dbReference type="GO" id="GO:0042803">
    <property type="term" value="F:protein homodimerization activity"/>
    <property type="evidence" value="ECO:0000250"/>
    <property type="project" value="HGNC-UCL"/>
</dbReference>
<dbReference type="GO" id="GO:0071880">
    <property type="term" value="P:adenylate cyclase-activating adrenergic receptor signaling pathway"/>
    <property type="evidence" value="ECO:0000250"/>
    <property type="project" value="HGNC-UCL"/>
</dbReference>
<dbReference type="GO" id="GO:0002025">
    <property type="term" value="P:norepinephrine-epinephrine-mediated vasodilation involved in regulation of systemic arterial blood pressure"/>
    <property type="evidence" value="ECO:0000318"/>
    <property type="project" value="GO_Central"/>
</dbReference>
<dbReference type="GO" id="GO:0043410">
    <property type="term" value="P:positive regulation of MAPK cascade"/>
    <property type="evidence" value="ECO:0000250"/>
    <property type="project" value="HGNC-UCL"/>
</dbReference>
<dbReference type="Gene3D" id="1.20.1070.10">
    <property type="entry name" value="Rhodopsin 7-helix transmembrane proteins"/>
    <property type="match status" value="1"/>
</dbReference>
<dbReference type="InterPro" id="IPR002233">
    <property type="entry name" value="ADR_fam"/>
</dbReference>
<dbReference type="InterPro" id="IPR000681">
    <property type="entry name" value="ADRB3_rcpt"/>
</dbReference>
<dbReference type="InterPro" id="IPR000276">
    <property type="entry name" value="GPCR_Rhodpsn"/>
</dbReference>
<dbReference type="InterPro" id="IPR017452">
    <property type="entry name" value="GPCR_Rhodpsn_7TM"/>
</dbReference>
<dbReference type="PANTHER" id="PTHR24248">
    <property type="entry name" value="ADRENERGIC RECEPTOR-RELATED G-PROTEIN COUPLED RECEPTOR"/>
    <property type="match status" value="1"/>
</dbReference>
<dbReference type="PANTHER" id="PTHR24248:SF3">
    <property type="entry name" value="BETA-3 ADRENERGIC RECEPTOR"/>
    <property type="match status" value="1"/>
</dbReference>
<dbReference type="Pfam" id="PF00001">
    <property type="entry name" value="7tm_1"/>
    <property type="match status" value="1"/>
</dbReference>
<dbReference type="PRINTS" id="PR01103">
    <property type="entry name" value="ADRENERGICR"/>
</dbReference>
<dbReference type="PRINTS" id="PR00563">
    <property type="entry name" value="ADRENRGCB3AR"/>
</dbReference>
<dbReference type="PRINTS" id="PR00237">
    <property type="entry name" value="GPCRRHODOPSN"/>
</dbReference>
<dbReference type="SMART" id="SM01381">
    <property type="entry name" value="7TM_GPCR_Srsx"/>
    <property type="match status" value="1"/>
</dbReference>
<dbReference type="SUPFAM" id="SSF81321">
    <property type="entry name" value="Family A G protein-coupled receptor-like"/>
    <property type="match status" value="1"/>
</dbReference>
<dbReference type="PROSITE" id="PS00237">
    <property type="entry name" value="G_PROTEIN_RECEP_F1_1"/>
    <property type="match status" value="1"/>
</dbReference>
<dbReference type="PROSITE" id="PS50262">
    <property type="entry name" value="G_PROTEIN_RECEP_F1_2"/>
    <property type="match status" value="1"/>
</dbReference>
<accession>Q95252</accession>
<accession>Q9MZ00</accession>
<organism>
    <name type="scientific">Sus scrofa</name>
    <name type="common">Pig</name>
    <dbReference type="NCBI Taxonomy" id="9823"/>
    <lineage>
        <taxon>Eukaryota</taxon>
        <taxon>Metazoa</taxon>
        <taxon>Chordata</taxon>
        <taxon>Craniata</taxon>
        <taxon>Vertebrata</taxon>
        <taxon>Euteleostomi</taxon>
        <taxon>Mammalia</taxon>
        <taxon>Eutheria</taxon>
        <taxon>Laurasiatheria</taxon>
        <taxon>Artiodactyla</taxon>
        <taxon>Suina</taxon>
        <taxon>Suidae</taxon>
        <taxon>Sus</taxon>
    </lineage>
</organism>
<proteinExistence type="evidence at transcript level"/>
<feature type="chain" id="PRO_0000069147" description="Beta-3 adrenergic receptor">
    <location>
        <begin position="1"/>
        <end position="407"/>
    </location>
</feature>
<feature type="topological domain" description="Extracellular" evidence="1">
    <location>
        <begin position="1"/>
        <end position="36"/>
    </location>
</feature>
<feature type="transmembrane region" description="Helical; Name=1" evidence="1">
    <location>
        <begin position="37"/>
        <end position="63"/>
    </location>
</feature>
<feature type="topological domain" description="Cytoplasmic" evidence="1">
    <location>
        <begin position="64"/>
        <end position="72"/>
    </location>
</feature>
<feature type="transmembrane region" description="Helical; Name=2" evidence="1">
    <location>
        <begin position="73"/>
        <end position="91"/>
    </location>
</feature>
<feature type="topological domain" description="Extracellular" evidence="1">
    <location>
        <begin position="92"/>
        <end position="111"/>
    </location>
</feature>
<feature type="transmembrane region" description="Helical; Name=3" evidence="1">
    <location>
        <begin position="112"/>
        <end position="133"/>
    </location>
</feature>
<feature type="topological domain" description="Cytoplasmic" evidence="1">
    <location>
        <begin position="134"/>
        <end position="155"/>
    </location>
</feature>
<feature type="transmembrane region" description="Helical; Name=4" evidence="1">
    <location>
        <begin position="156"/>
        <end position="178"/>
    </location>
</feature>
<feature type="topological domain" description="Extracellular" evidence="1">
    <location>
        <begin position="179"/>
        <end position="203"/>
    </location>
</feature>
<feature type="transmembrane region" description="Helical; Name=5" evidence="1">
    <location>
        <begin position="204"/>
        <end position="225"/>
    </location>
</feature>
<feature type="topological domain" description="Cytoplasmic" evidence="1">
    <location>
        <begin position="226"/>
        <end position="292"/>
    </location>
</feature>
<feature type="transmembrane region" description="Helical; Name=6" evidence="1">
    <location>
        <begin position="293"/>
        <end position="314"/>
    </location>
</feature>
<feature type="topological domain" description="Extracellular" evidence="1">
    <location>
        <begin position="315"/>
        <end position="326"/>
    </location>
</feature>
<feature type="transmembrane region" description="Helical; Name=7" evidence="1">
    <location>
        <begin position="327"/>
        <end position="347"/>
    </location>
</feature>
<feature type="topological domain" description="Cytoplasmic" evidence="1">
    <location>
        <begin position="348"/>
        <end position="407"/>
    </location>
</feature>
<feature type="region of interest" description="Disordered" evidence="5">
    <location>
        <begin position="1"/>
        <end position="23"/>
    </location>
</feature>
<feature type="region of interest" description="Disordered" evidence="5">
    <location>
        <begin position="247"/>
        <end position="277"/>
    </location>
</feature>
<feature type="region of interest" description="Disordered" evidence="5">
    <location>
        <begin position="370"/>
        <end position="407"/>
    </location>
</feature>
<feature type="compositionally biased region" description="Polar residues" evidence="5">
    <location>
        <begin position="1"/>
        <end position="11"/>
    </location>
</feature>
<feature type="compositionally biased region" description="Low complexity" evidence="5">
    <location>
        <begin position="370"/>
        <end position="382"/>
    </location>
</feature>
<feature type="lipid moiety-binding region" description="S-palmitoyl cysteine" evidence="1">
    <location>
        <position position="361"/>
    </location>
</feature>
<feature type="glycosylation site" description="N-linked (GlcNAc...) asparagine" evidence="3">
    <location>
        <position position="8"/>
    </location>
</feature>
<feature type="glycosylation site" description="N-linked (GlcNAc...) asparagine" evidence="3">
    <location>
        <position position="26"/>
    </location>
</feature>
<feature type="disulfide bond" evidence="4">
    <location>
        <begin position="110"/>
        <end position="196"/>
    </location>
</feature>
<feature type="disulfide bond" evidence="4">
    <location>
        <begin position="189"/>
        <end position="195"/>
    </location>
</feature>
<feature type="sequence conflict" description="In Ref. 2; AAB07688." evidence="7" ref="2">
    <original>QGNSSLPPRPDVSTLAPNN</original>
    <variation>HRNGSLALWSDAPTLDPSA</variation>
    <location>
        <begin position="6"/>
        <end position="24"/>
    </location>
</feature>
<feature type="sequence conflict" description="In Ref. 2; AAB07688." evidence="7" ref="2">
    <original>V</original>
    <variation>A</variation>
    <location>
        <position position="37"/>
    </location>
</feature>
<feature type="sequence conflict" description="In Ref. 2; AAB07688." evidence="7" ref="2">
    <location>
        <begin position="46"/>
        <end position="48"/>
    </location>
</feature>
<feature type="sequence conflict" description="In Ref. 2; AAB07688." evidence="7" ref="2">
    <original>V</original>
    <variation>I</variation>
    <location>
        <position position="60"/>
    </location>
</feature>
<feature type="sequence conflict" description="In Ref. 2; AAB07688." evidence="7" ref="2">
    <original>M</original>
    <variation>I</variation>
    <location>
        <position position="71"/>
    </location>
</feature>
<feature type="sequence conflict" description="In Ref. 2; AAB07688." evidence="7" ref="2">
    <original>T</original>
    <variation>A</variation>
    <location>
        <position position="81"/>
    </location>
</feature>
<feature type="sequence conflict" description="In Ref. 2; AAB07688." evidence="7" ref="2">
    <original>V</original>
    <variation>M</variation>
    <location>
        <position position="91"/>
    </location>
</feature>
<feature type="sequence conflict" description="In Ref. 2; AAB07688." evidence="7" ref="2">
    <original>T</original>
    <variation>A</variation>
    <location>
        <position position="95"/>
    </location>
</feature>
<gene>
    <name type="primary">ADRB3</name>
    <name type="synonym">BAR3</name>
</gene>
<reference key="1">
    <citation type="submission" date="2000-06" db="EMBL/GenBank/DDBJ databases">
        <title>Sus scrofa beta-3-adrenergic receptor (BAR3) gene.</title>
        <authorList>
            <person name="Smith T.R."/>
            <person name="Bidwell C.A."/>
            <person name="Mills S.E."/>
        </authorList>
    </citation>
    <scope>NUCLEOTIDE SEQUENCE [GENOMIC DNA]</scope>
</reference>
<reference key="2">
    <citation type="journal article" date="1995" name="J. Anim. Sci.">
        <title>Beta-adrenergic receptor subtype transcripts in porcine adipose tissue.</title>
        <authorList>
            <person name="McNeel R.L."/>
            <person name="Mersmann H.J."/>
        </authorList>
    </citation>
    <scope>NUCLEOTIDE SEQUENCE [MRNA] OF 2-105</scope>
    <scope>TISSUE SPECIFICITY</scope>
    <source>
        <tissue>Adipose tissue</tissue>
    </source>
</reference>